<name>CC117_HUMAN</name>
<proteinExistence type="evidence at protein level"/>
<comment type="function">
    <text evidence="4">Facilitates DNA repair, cell cycle progression, and cell proliferation through its interaction with CIAO2B.</text>
</comment>
<comment type="subunit">
    <text evidence="4">Interacts with CIAO2B; the interaction is direct (PubMed:30742009). Interacts with MMS19; the interaction is indirect (PubMed:30742009).</text>
</comment>
<comment type="interaction">
    <interactant intactId="EBI-3387963">
        <id>Q8IWD4</id>
    </interactant>
    <interactant intactId="EBI-296047">
        <id>P07900</id>
        <label>HSP90AA1</label>
    </interactant>
    <organismsDiffer>false</organismsDiffer>
    <experiments>7</experiments>
</comment>
<comment type="interaction">
    <interactant intactId="EBI-3387963">
        <id>Q8IWD4</id>
    </interactant>
    <interactant intactId="EBI-1054052">
        <id>P31948</id>
        <label>STIP1</label>
    </interactant>
    <organismsDiffer>false</organismsDiffer>
    <experiments>5</experiments>
</comment>
<comment type="subcellular location">
    <subcellularLocation>
        <location evidence="4">Cytoplasm</location>
        <location evidence="4">Cytoskeleton</location>
        <location evidence="4">Spindle</location>
    </subcellularLocation>
    <subcellularLocation>
        <location evidence="4">Nucleus</location>
    </subcellularLocation>
    <text evidence="4">Mitotic spindle.</text>
</comment>
<comment type="alternative products">
    <event type="alternative splicing"/>
    <isoform>
        <id>Q8IWD4-1</id>
        <name>1</name>
        <sequence type="displayed"/>
    </isoform>
    <isoform>
        <id>Q8IWD4-2</id>
        <name>2</name>
        <sequence type="described" ref="VSP_021185"/>
    </isoform>
    <isoform>
        <id>Q8IWD4-3</id>
        <name>3</name>
        <sequence type="described" ref="VSP_054912"/>
    </isoform>
    <isoform>
        <id>Q8IWD4-4</id>
        <name>4</name>
        <sequence type="described" ref="VSP_054913"/>
    </isoform>
</comment>
<reference key="1">
    <citation type="journal article" date="2004" name="Genome Biol.">
        <title>A genome annotation-driven approach to cloning the human ORFeome.</title>
        <authorList>
            <person name="Collins J.E."/>
            <person name="Wright C.L."/>
            <person name="Edwards C.A."/>
            <person name="Davis M.P."/>
            <person name="Grinham J.A."/>
            <person name="Cole C.G."/>
            <person name="Goward M.E."/>
            <person name="Aguado B."/>
            <person name="Mallya M."/>
            <person name="Mokrab Y."/>
            <person name="Huckle E.J."/>
            <person name="Beare D.M."/>
            <person name="Dunham I."/>
        </authorList>
    </citation>
    <scope>NUCLEOTIDE SEQUENCE [LARGE SCALE MRNA] (ISOFORM 2)</scope>
</reference>
<reference key="2">
    <citation type="journal article" date="2004" name="Nat. Genet.">
        <title>Complete sequencing and characterization of 21,243 full-length human cDNAs.</title>
        <authorList>
            <person name="Ota T."/>
            <person name="Suzuki Y."/>
            <person name="Nishikawa T."/>
            <person name="Otsuki T."/>
            <person name="Sugiyama T."/>
            <person name="Irie R."/>
            <person name="Wakamatsu A."/>
            <person name="Hayashi K."/>
            <person name="Sato H."/>
            <person name="Nagai K."/>
            <person name="Kimura K."/>
            <person name="Makita H."/>
            <person name="Sekine M."/>
            <person name="Obayashi M."/>
            <person name="Nishi T."/>
            <person name="Shibahara T."/>
            <person name="Tanaka T."/>
            <person name="Ishii S."/>
            <person name="Yamamoto J."/>
            <person name="Saito K."/>
            <person name="Kawai Y."/>
            <person name="Isono Y."/>
            <person name="Nakamura Y."/>
            <person name="Nagahari K."/>
            <person name="Murakami K."/>
            <person name="Yasuda T."/>
            <person name="Iwayanagi T."/>
            <person name="Wagatsuma M."/>
            <person name="Shiratori A."/>
            <person name="Sudo H."/>
            <person name="Hosoiri T."/>
            <person name="Kaku Y."/>
            <person name="Kodaira H."/>
            <person name="Kondo H."/>
            <person name="Sugawara M."/>
            <person name="Takahashi M."/>
            <person name="Kanda K."/>
            <person name="Yokoi T."/>
            <person name="Furuya T."/>
            <person name="Kikkawa E."/>
            <person name="Omura Y."/>
            <person name="Abe K."/>
            <person name="Kamihara K."/>
            <person name="Katsuta N."/>
            <person name="Sato K."/>
            <person name="Tanikawa M."/>
            <person name="Yamazaki M."/>
            <person name="Ninomiya K."/>
            <person name="Ishibashi T."/>
            <person name="Yamashita H."/>
            <person name="Murakawa K."/>
            <person name="Fujimori K."/>
            <person name="Tanai H."/>
            <person name="Kimata M."/>
            <person name="Watanabe M."/>
            <person name="Hiraoka S."/>
            <person name="Chiba Y."/>
            <person name="Ishida S."/>
            <person name="Ono Y."/>
            <person name="Takiguchi S."/>
            <person name="Watanabe S."/>
            <person name="Yosida M."/>
            <person name="Hotuta T."/>
            <person name="Kusano J."/>
            <person name="Kanehori K."/>
            <person name="Takahashi-Fujii A."/>
            <person name="Hara H."/>
            <person name="Tanase T.-O."/>
            <person name="Nomura Y."/>
            <person name="Togiya S."/>
            <person name="Komai F."/>
            <person name="Hara R."/>
            <person name="Takeuchi K."/>
            <person name="Arita M."/>
            <person name="Imose N."/>
            <person name="Musashino K."/>
            <person name="Yuuki H."/>
            <person name="Oshima A."/>
            <person name="Sasaki N."/>
            <person name="Aotsuka S."/>
            <person name="Yoshikawa Y."/>
            <person name="Matsunawa H."/>
            <person name="Ichihara T."/>
            <person name="Shiohata N."/>
            <person name="Sano S."/>
            <person name="Moriya S."/>
            <person name="Momiyama H."/>
            <person name="Satoh N."/>
            <person name="Takami S."/>
            <person name="Terashima Y."/>
            <person name="Suzuki O."/>
            <person name="Nakagawa S."/>
            <person name="Senoh A."/>
            <person name="Mizoguchi H."/>
            <person name="Goto Y."/>
            <person name="Shimizu F."/>
            <person name="Wakebe H."/>
            <person name="Hishigaki H."/>
            <person name="Watanabe T."/>
            <person name="Sugiyama A."/>
            <person name="Takemoto M."/>
            <person name="Kawakami B."/>
            <person name="Yamazaki M."/>
            <person name="Watanabe K."/>
            <person name="Kumagai A."/>
            <person name="Itakura S."/>
            <person name="Fukuzumi Y."/>
            <person name="Fujimori Y."/>
            <person name="Komiyama M."/>
            <person name="Tashiro H."/>
            <person name="Tanigami A."/>
            <person name="Fujiwara T."/>
            <person name="Ono T."/>
            <person name="Yamada K."/>
            <person name="Fujii Y."/>
            <person name="Ozaki K."/>
            <person name="Hirao M."/>
            <person name="Ohmori Y."/>
            <person name="Kawabata A."/>
            <person name="Hikiji T."/>
            <person name="Kobatake N."/>
            <person name="Inagaki H."/>
            <person name="Ikema Y."/>
            <person name="Okamoto S."/>
            <person name="Okitani R."/>
            <person name="Kawakami T."/>
            <person name="Noguchi S."/>
            <person name="Itoh T."/>
            <person name="Shigeta K."/>
            <person name="Senba T."/>
            <person name="Matsumura K."/>
            <person name="Nakajima Y."/>
            <person name="Mizuno T."/>
            <person name="Morinaga M."/>
            <person name="Sasaki M."/>
            <person name="Togashi T."/>
            <person name="Oyama M."/>
            <person name="Hata H."/>
            <person name="Watanabe M."/>
            <person name="Komatsu T."/>
            <person name="Mizushima-Sugano J."/>
            <person name="Satoh T."/>
            <person name="Shirai Y."/>
            <person name="Takahashi Y."/>
            <person name="Nakagawa K."/>
            <person name="Okumura K."/>
            <person name="Nagase T."/>
            <person name="Nomura N."/>
            <person name="Kikuchi H."/>
            <person name="Masuho Y."/>
            <person name="Yamashita R."/>
            <person name="Nakai K."/>
            <person name="Yada T."/>
            <person name="Nakamura Y."/>
            <person name="Ohara O."/>
            <person name="Isogai T."/>
            <person name="Sugano S."/>
        </authorList>
    </citation>
    <scope>NUCLEOTIDE SEQUENCE [LARGE SCALE MRNA] (ISOFORMS 1; 3 AND 4)</scope>
    <source>
        <tissue>Brain</tissue>
        <tissue>Cerebellum</tissue>
        <tissue>Testis</tissue>
        <tissue>Tongue</tissue>
    </source>
</reference>
<reference key="3">
    <citation type="journal article" date="1999" name="Nature">
        <title>The DNA sequence of human chromosome 22.</title>
        <authorList>
            <person name="Dunham I."/>
            <person name="Hunt A.R."/>
            <person name="Collins J.E."/>
            <person name="Bruskiewich R."/>
            <person name="Beare D.M."/>
            <person name="Clamp M."/>
            <person name="Smink L.J."/>
            <person name="Ainscough R."/>
            <person name="Almeida J.P."/>
            <person name="Babbage A.K."/>
            <person name="Bagguley C."/>
            <person name="Bailey J."/>
            <person name="Barlow K.F."/>
            <person name="Bates K.N."/>
            <person name="Beasley O.P."/>
            <person name="Bird C.P."/>
            <person name="Blakey S.E."/>
            <person name="Bridgeman A.M."/>
            <person name="Buck D."/>
            <person name="Burgess J."/>
            <person name="Burrill W.D."/>
            <person name="Burton J."/>
            <person name="Carder C."/>
            <person name="Carter N.P."/>
            <person name="Chen Y."/>
            <person name="Clark G."/>
            <person name="Clegg S.M."/>
            <person name="Cobley V.E."/>
            <person name="Cole C.G."/>
            <person name="Collier R.E."/>
            <person name="Connor R."/>
            <person name="Conroy D."/>
            <person name="Corby N.R."/>
            <person name="Coville G.J."/>
            <person name="Cox A.V."/>
            <person name="Davis J."/>
            <person name="Dawson E."/>
            <person name="Dhami P.D."/>
            <person name="Dockree C."/>
            <person name="Dodsworth S.J."/>
            <person name="Durbin R.M."/>
            <person name="Ellington A.G."/>
            <person name="Evans K.L."/>
            <person name="Fey J.M."/>
            <person name="Fleming K."/>
            <person name="French L."/>
            <person name="Garner A.A."/>
            <person name="Gilbert J.G.R."/>
            <person name="Goward M.E."/>
            <person name="Grafham D.V."/>
            <person name="Griffiths M.N.D."/>
            <person name="Hall C."/>
            <person name="Hall R.E."/>
            <person name="Hall-Tamlyn G."/>
            <person name="Heathcott R.W."/>
            <person name="Ho S."/>
            <person name="Holmes S."/>
            <person name="Hunt S.E."/>
            <person name="Jones M.C."/>
            <person name="Kershaw J."/>
            <person name="Kimberley A.M."/>
            <person name="King A."/>
            <person name="Laird G.K."/>
            <person name="Langford C.F."/>
            <person name="Leversha M.A."/>
            <person name="Lloyd C."/>
            <person name="Lloyd D.M."/>
            <person name="Martyn I.D."/>
            <person name="Mashreghi-Mohammadi M."/>
            <person name="Matthews L.H."/>
            <person name="Mccann O.T."/>
            <person name="Mcclay J."/>
            <person name="Mclaren S."/>
            <person name="McMurray A.A."/>
            <person name="Milne S.A."/>
            <person name="Mortimore B.J."/>
            <person name="Odell C.N."/>
            <person name="Pavitt R."/>
            <person name="Pearce A.V."/>
            <person name="Pearson D."/>
            <person name="Phillimore B.J.C.T."/>
            <person name="Phillips S.H."/>
            <person name="Plumb R.W."/>
            <person name="Ramsay H."/>
            <person name="Ramsey Y."/>
            <person name="Rogers L."/>
            <person name="Ross M.T."/>
            <person name="Scott C.E."/>
            <person name="Sehra H.K."/>
            <person name="Skuce C.D."/>
            <person name="Smalley S."/>
            <person name="Smith M.L."/>
            <person name="Soderlund C."/>
            <person name="Spragon L."/>
            <person name="Steward C.A."/>
            <person name="Sulston J.E."/>
            <person name="Swann R.M."/>
            <person name="Vaudin M."/>
            <person name="Wall M."/>
            <person name="Wallis J.M."/>
            <person name="Whiteley M.N."/>
            <person name="Willey D.L."/>
            <person name="Williams L."/>
            <person name="Williams S.A."/>
            <person name="Williamson H."/>
            <person name="Wilmer T.E."/>
            <person name="Wilming L."/>
            <person name="Wright C.L."/>
            <person name="Hubbard T."/>
            <person name="Bentley D.R."/>
            <person name="Beck S."/>
            <person name="Rogers J."/>
            <person name="Shimizu N."/>
            <person name="Minoshima S."/>
            <person name="Kawasaki K."/>
            <person name="Sasaki T."/>
            <person name="Asakawa S."/>
            <person name="Kudoh J."/>
            <person name="Shintani A."/>
            <person name="Shibuya K."/>
            <person name="Yoshizaki Y."/>
            <person name="Aoki N."/>
            <person name="Mitsuyama S."/>
            <person name="Roe B.A."/>
            <person name="Chen F."/>
            <person name="Chu L."/>
            <person name="Crabtree J."/>
            <person name="Deschamps S."/>
            <person name="Do A."/>
            <person name="Do T."/>
            <person name="Dorman A."/>
            <person name="Fang F."/>
            <person name="Fu Y."/>
            <person name="Hu P."/>
            <person name="Hua A."/>
            <person name="Kenton S."/>
            <person name="Lai H."/>
            <person name="Lao H.I."/>
            <person name="Lewis J."/>
            <person name="Lewis S."/>
            <person name="Lin S.-P."/>
            <person name="Loh P."/>
            <person name="Malaj E."/>
            <person name="Nguyen T."/>
            <person name="Pan H."/>
            <person name="Phan S."/>
            <person name="Qi S."/>
            <person name="Qian Y."/>
            <person name="Ray L."/>
            <person name="Ren Q."/>
            <person name="Shaull S."/>
            <person name="Sloan D."/>
            <person name="Song L."/>
            <person name="Wang Q."/>
            <person name="Wang Y."/>
            <person name="Wang Z."/>
            <person name="White J."/>
            <person name="Willingham D."/>
            <person name="Wu H."/>
            <person name="Yao Z."/>
            <person name="Zhan M."/>
            <person name="Zhang G."/>
            <person name="Chissoe S."/>
            <person name="Murray J."/>
            <person name="Miller N."/>
            <person name="Minx P."/>
            <person name="Fulton R."/>
            <person name="Johnson D."/>
            <person name="Bemis G."/>
            <person name="Bentley D."/>
            <person name="Bradshaw H."/>
            <person name="Bourne S."/>
            <person name="Cordes M."/>
            <person name="Du Z."/>
            <person name="Fulton L."/>
            <person name="Goela D."/>
            <person name="Graves T."/>
            <person name="Hawkins J."/>
            <person name="Hinds K."/>
            <person name="Kemp K."/>
            <person name="Latreille P."/>
            <person name="Layman D."/>
            <person name="Ozersky P."/>
            <person name="Rohlfing T."/>
            <person name="Scheet P."/>
            <person name="Walker C."/>
            <person name="Wamsley A."/>
            <person name="Wohldmann P."/>
            <person name="Pepin K."/>
            <person name="Nelson J."/>
            <person name="Korf I."/>
            <person name="Bedell J.A."/>
            <person name="Hillier L.W."/>
            <person name="Mardis E."/>
            <person name="Waterston R."/>
            <person name="Wilson R."/>
            <person name="Emanuel B.S."/>
            <person name="Shaikh T."/>
            <person name="Kurahashi H."/>
            <person name="Saitta S."/>
            <person name="Budarf M.L."/>
            <person name="McDermid H.E."/>
            <person name="Johnson A."/>
            <person name="Wong A.C.C."/>
            <person name="Morrow B.E."/>
            <person name="Edelmann L."/>
            <person name="Kim U.J."/>
            <person name="Shizuya H."/>
            <person name="Simon M.I."/>
            <person name="Dumanski J.P."/>
            <person name="Peyrard M."/>
            <person name="Kedra D."/>
            <person name="Seroussi E."/>
            <person name="Fransson I."/>
            <person name="Tapia I."/>
            <person name="Bruder C.E."/>
            <person name="O'Brien K.P."/>
            <person name="Wilkinson P."/>
            <person name="Bodenteich A."/>
            <person name="Hartman K."/>
            <person name="Hu X."/>
            <person name="Khan A.S."/>
            <person name="Lane L."/>
            <person name="Tilahun Y."/>
            <person name="Wright H."/>
        </authorList>
    </citation>
    <scope>NUCLEOTIDE SEQUENCE [LARGE SCALE GENOMIC DNA]</scope>
</reference>
<reference key="4">
    <citation type="submission" date="2005-07" db="EMBL/GenBank/DDBJ databases">
        <authorList>
            <person name="Mural R.J."/>
            <person name="Istrail S."/>
            <person name="Sutton G.G."/>
            <person name="Florea L."/>
            <person name="Halpern A.L."/>
            <person name="Mobarry C.M."/>
            <person name="Lippert R."/>
            <person name="Walenz B."/>
            <person name="Shatkay H."/>
            <person name="Dew I."/>
            <person name="Miller J.R."/>
            <person name="Flanigan M.J."/>
            <person name="Edwards N.J."/>
            <person name="Bolanos R."/>
            <person name="Fasulo D."/>
            <person name="Halldorsson B.V."/>
            <person name="Hannenhalli S."/>
            <person name="Turner R."/>
            <person name="Yooseph S."/>
            <person name="Lu F."/>
            <person name="Nusskern D.R."/>
            <person name="Shue B.C."/>
            <person name="Zheng X.H."/>
            <person name="Zhong F."/>
            <person name="Delcher A.L."/>
            <person name="Huson D.H."/>
            <person name="Kravitz S.A."/>
            <person name="Mouchard L."/>
            <person name="Reinert K."/>
            <person name="Remington K.A."/>
            <person name="Clark A.G."/>
            <person name="Waterman M.S."/>
            <person name="Eichler E.E."/>
            <person name="Adams M.D."/>
            <person name="Hunkapiller M.W."/>
            <person name="Myers E.W."/>
            <person name="Venter J.C."/>
        </authorList>
    </citation>
    <scope>NUCLEOTIDE SEQUENCE [LARGE SCALE GENOMIC DNA]</scope>
</reference>
<reference key="5">
    <citation type="journal article" date="2004" name="Genome Res.">
        <title>The status, quality, and expansion of the NIH full-length cDNA project: the Mammalian Gene Collection (MGC).</title>
        <authorList>
            <consortium name="The MGC Project Team"/>
        </authorList>
    </citation>
    <scope>NUCLEOTIDE SEQUENCE [LARGE SCALE MRNA] (ISOFORM 1)</scope>
    <source>
        <tissue>Testis</tissue>
        <tissue>Testis carcinoma</tissue>
        <tissue>Uterine leiomyoma</tissue>
    </source>
</reference>
<reference key="6">
    <citation type="journal article" date="2013" name="J. Proteome Res.">
        <title>Toward a comprehensive characterization of a human cancer cell phosphoproteome.</title>
        <authorList>
            <person name="Zhou H."/>
            <person name="Di Palma S."/>
            <person name="Preisinger C."/>
            <person name="Peng M."/>
            <person name="Polat A.N."/>
            <person name="Heck A.J."/>
            <person name="Mohammed S."/>
        </authorList>
    </citation>
    <scope>PHOSPHORYLATION [LARGE SCALE ANALYSIS] AT SER-53</scope>
    <scope>IDENTIFICATION BY MASS SPECTROMETRY [LARGE SCALE ANALYSIS]</scope>
    <source>
        <tissue>Cervix carcinoma</tissue>
    </source>
</reference>
<reference key="7">
    <citation type="journal article" date="2019" name="Sci. Rep.">
        <title>Nkx2-5 Second Heart Field Target Gene Ccdc117 Regulates DNA Metabolism and Proliferation.</title>
        <authorList>
            <person name="Horton A.J."/>
            <person name="Brooker J."/>
            <person name="Streitfeld W.S."/>
            <person name="Flessa M.E."/>
            <person name="Pillai B."/>
            <person name="Simpson R."/>
            <person name="Clark C.D."/>
            <person name="Gooz M.B."/>
            <person name="Sutton K.K."/>
            <person name="Foley A.C."/>
            <person name="Lee K.H."/>
        </authorList>
    </citation>
    <scope>INTERACTION WITH CIAO2B AND MMS19</scope>
    <scope>SUBCELLULAR LOCATION</scope>
    <scope>FUNCTION</scope>
</reference>
<organism>
    <name type="scientific">Homo sapiens</name>
    <name type="common">Human</name>
    <dbReference type="NCBI Taxonomy" id="9606"/>
    <lineage>
        <taxon>Eukaryota</taxon>
        <taxon>Metazoa</taxon>
        <taxon>Chordata</taxon>
        <taxon>Craniata</taxon>
        <taxon>Vertebrata</taxon>
        <taxon>Euteleostomi</taxon>
        <taxon>Mammalia</taxon>
        <taxon>Eutheria</taxon>
        <taxon>Euarchontoglires</taxon>
        <taxon>Primates</taxon>
        <taxon>Haplorrhini</taxon>
        <taxon>Catarrhini</taxon>
        <taxon>Hominidae</taxon>
        <taxon>Homo</taxon>
    </lineage>
</organism>
<evidence type="ECO:0000250" key="1">
    <source>
        <dbReference type="UniProtKB" id="Q6PB51"/>
    </source>
</evidence>
<evidence type="ECO:0000255" key="2"/>
<evidence type="ECO:0000256" key="3">
    <source>
        <dbReference type="SAM" id="MobiDB-lite"/>
    </source>
</evidence>
<evidence type="ECO:0000269" key="4">
    <source>
    </source>
</evidence>
<evidence type="ECO:0000303" key="5">
    <source>
    </source>
</evidence>
<evidence type="ECO:0000303" key="6">
    <source>
    </source>
</evidence>
<evidence type="ECO:0000305" key="7"/>
<evidence type="ECO:0000312" key="8">
    <source>
        <dbReference type="HGNC" id="HGNC:26599"/>
    </source>
</evidence>
<evidence type="ECO:0007744" key="9">
    <source>
    </source>
</evidence>
<protein>
    <recommendedName>
        <fullName evidence="7">Coiled-coil domain-containing protein 117</fullName>
    </recommendedName>
</protein>
<dbReference type="EMBL" id="CR456461">
    <property type="protein sequence ID" value="CAG30347.1"/>
    <property type="molecule type" value="mRNA"/>
</dbReference>
<dbReference type="EMBL" id="AK091133">
    <property type="protein sequence ID" value="BAC03592.1"/>
    <property type="molecule type" value="mRNA"/>
</dbReference>
<dbReference type="EMBL" id="AK289516">
    <property type="protein sequence ID" value="BAF82205.1"/>
    <property type="molecule type" value="mRNA"/>
</dbReference>
<dbReference type="EMBL" id="AK295140">
    <property type="protein sequence ID" value="BAH11987.1"/>
    <property type="molecule type" value="mRNA"/>
</dbReference>
<dbReference type="EMBL" id="AK302925">
    <property type="protein sequence ID" value="BAH13846.1"/>
    <property type="molecule type" value="mRNA"/>
</dbReference>
<dbReference type="EMBL" id="AL023494">
    <property type="status" value="NOT_ANNOTATED_CDS"/>
    <property type="molecule type" value="Genomic_DNA"/>
</dbReference>
<dbReference type="EMBL" id="Z93930">
    <property type="status" value="NOT_ANNOTATED_CDS"/>
    <property type="molecule type" value="Genomic_DNA"/>
</dbReference>
<dbReference type="EMBL" id="CH471095">
    <property type="protein sequence ID" value="EAW59761.1"/>
    <property type="molecule type" value="Genomic_DNA"/>
</dbReference>
<dbReference type="EMBL" id="BC040488">
    <property type="protein sequence ID" value="AAH40488.1"/>
    <property type="molecule type" value="mRNA"/>
</dbReference>
<dbReference type="EMBL" id="BC053874">
    <property type="protein sequence ID" value="AAH53874.1"/>
    <property type="molecule type" value="mRNA"/>
</dbReference>
<dbReference type="EMBL" id="BC065549">
    <property type="protein sequence ID" value="AAH65549.1"/>
    <property type="molecule type" value="mRNA"/>
</dbReference>
<dbReference type="CCDS" id="CCDS13846.1">
    <molecule id="Q8IWD4-1"/>
</dbReference>
<dbReference type="CCDS" id="CCDS63435.1">
    <molecule id="Q8IWD4-4"/>
</dbReference>
<dbReference type="CCDS" id="CCDS63436.1">
    <molecule id="Q8IWD4-3"/>
</dbReference>
<dbReference type="RefSeq" id="NP_001271192.1">
    <molecule id="Q8IWD4-3"/>
    <property type="nucleotide sequence ID" value="NM_001284263.2"/>
</dbReference>
<dbReference type="RefSeq" id="NP_001271193.1">
    <molecule id="Q8IWD4-4"/>
    <property type="nucleotide sequence ID" value="NM_001284264.2"/>
</dbReference>
<dbReference type="RefSeq" id="NP_001271194.1">
    <property type="nucleotide sequence ID" value="NM_001284265.1"/>
</dbReference>
<dbReference type="RefSeq" id="NP_775781.1">
    <molecule id="Q8IWD4-1"/>
    <property type="nucleotide sequence ID" value="NM_173510.4"/>
</dbReference>
<dbReference type="BioGRID" id="127277">
    <property type="interactions" value="27"/>
</dbReference>
<dbReference type="FunCoup" id="Q8IWD4">
    <property type="interactions" value="474"/>
</dbReference>
<dbReference type="IntAct" id="Q8IWD4">
    <property type="interactions" value="22"/>
</dbReference>
<dbReference type="STRING" id="9606.ENSP00000249064"/>
<dbReference type="GlyGen" id="Q8IWD4">
    <property type="glycosylation" value="1 site, 1 O-linked glycan (1 site)"/>
</dbReference>
<dbReference type="iPTMnet" id="Q8IWD4"/>
<dbReference type="PhosphoSitePlus" id="Q8IWD4"/>
<dbReference type="BioMuta" id="CCDC117"/>
<dbReference type="DMDM" id="74759628"/>
<dbReference type="jPOST" id="Q8IWD4"/>
<dbReference type="MassIVE" id="Q8IWD4"/>
<dbReference type="PaxDb" id="9606-ENSP00000249064"/>
<dbReference type="PeptideAtlas" id="Q8IWD4"/>
<dbReference type="ProteomicsDB" id="6467"/>
<dbReference type="ProteomicsDB" id="6927"/>
<dbReference type="ProteomicsDB" id="70845">
    <molecule id="Q8IWD4-1"/>
</dbReference>
<dbReference type="ProteomicsDB" id="70846">
    <molecule id="Q8IWD4-2"/>
</dbReference>
<dbReference type="Pumba" id="Q8IWD4"/>
<dbReference type="Antibodypedia" id="226">
    <property type="antibodies" value="116 antibodies from 17 providers"/>
</dbReference>
<dbReference type="DNASU" id="150275"/>
<dbReference type="Ensembl" id="ENST00000249064.9">
    <molecule id="Q8IWD4-1"/>
    <property type="protein sequence ID" value="ENSP00000249064.4"/>
    <property type="gene ID" value="ENSG00000159873.10"/>
</dbReference>
<dbReference type="Ensembl" id="ENST00000421503.6">
    <molecule id="Q8IWD4-4"/>
    <property type="protein sequence ID" value="ENSP00000387827.2"/>
    <property type="gene ID" value="ENSG00000159873.10"/>
</dbReference>
<dbReference type="Ensembl" id="ENST00000448492.6">
    <molecule id="Q8IWD4-3"/>
    <property type="protein sequence ID" value="ENSP00000389478.2"/>
    <property type="gene ID" value="ENSG00000159873.10"/>
</dbReference>
<dbReference type="GeneID" id="150275"/>
<dbReference type="KEGG" id="hsa:150275"/>
<dbReference type="MANE-Select" id="ENST00000249064.9">
    <property type="protein sequence ID" value="ENSP00000249064.4"/>
    <property type="RefSeq nucleotide sequence ID" value="NM_173510.4"/>
    <property type="RefSeq protein sequence ID" value="NP_775781.1"/>
</dbReference>
<dbReference type="UCSC" id="uc003aeb.5">
    <molecule id="Q8IWD4-1"/>
    <property type="organism name" value="human"/>
</dbReference>
<dbReference type="AGR" id="HGNC:26599"/>
<dbReference type="CTD" id="150275"/>
<dbReference type="GeneCards" id="CCDC117"/>
<dbReference type="HGNC" id="HGNC:26599">
    <property type="gene designation" value="CCDC117"/>
</dbReference>
<dbReference type="HPA" id="ENSG00000159873">
    <property type="expression patterns" value="Low tissue specificity"/>
</dbReference>
<dbReference type="neXtProt" id="NX_Q8IWD4"/>
<dbReference type="OpenTargets" id="ENSG00000159873"/>
<dbReference type="PharmGKB" id="PA145149315"/>
<dbReference type="VEuPathDB" id="HostDB:ENSG00000159873"/>
<dbReference type="eggNOG" id="ENOG502S42Q">
    <property type="taxonomic scope" value="Eukaryota"/>
</dbReference>
<dbReference type="GeneTree" id="ENSGT00390000005772"/>
<dbReference type="HOGENOM" id="CLU_083045_0_0_1"/>
<dbReference type="InParanoid" id="Q8IWD4"/>
<dbReference type="OMA" id="NTSWERR"/>
<dbReference type="OrthoDB" id="9450632at2759"/>
<dbReference type="PAN-GO" id="Q8IWD4">
    <property type="GO annotations" value="0 GO annotations based on evolutionary models"/>
</dbReference>
<dbReference type="PhylomeDB" id="Q8IWD4"/>
<dbReference type="TreeFam" id="TF335674"/>
<dbReference type="PathwayCommons" id="Q8IWD4"/>
<dbReference type="SignaLink" id="Q8IWD4"/>
<dbReference type="BioGRID-ORCS" id="150275">
    <property type="hits" value="28 hits in 1161 CRISPR screens"/>
</dbReference>
<dbReference type="ChiTaRS" id="CCDC117">
    <property type="organism name" value="human"/>
</dbReference>
<dbReference type="GenomeRNAi" id="150275"/>
<dbReference type="Pharos" id="Q8IWD4">
    <property type="development level" value="Tdark"/>
</dbReference>
<dbReference type="PRO" id="PR:Q8IWD4"/>
<dbReference type="Proteomes" id="UP000005640">
    <property type="component" value="Chromosome 22"/>
</dbReference>
<dbReference type="RNAct" id="Q8IWD4">
    <property type="molecule type" value="protein"/>
</dbReference>
<dbReference type="Bgee" id="ENSG00000159873">
    <property type="expression patterns" value="Expressed in buccal mucosa cell and 194 other cell types or tissues"/>
</dbReference>
<dbReference type="ExpressionAtlas" id="Q8IWD4">
    <property type="expression patterns" value="baseline and differential"/>
</dbReference>
<dbReference type="GO" id="GO:0005737">
    <property type="term" value="C:cytoplasm"/>
    <property type="evidence" value="ECO:0007669"/>
    <property type="project" value="UniProtKB-KW"/>
</dbReference>
<dbReference type="GO" id="GO:0072686">
    <property type="term" value="C:mitotic spindle"/>
    <property type="evidence" value="ECO:0000314"/>
    <property type="project" value="UniProtKB"/>
</dbReference>
<dbReference type="GO" id="GO:0005634">
    <property type="term" value="C:nucleus"/>
    <property type="evidence" value="ECO:0007669"/>
    <property type="project" value="UniProtKB-SubCell"/>
</dbReference>
<dbReference type="GO" id="GO:0008284">
    <property type="term" value="P:positive regulation of cell population proliferation"/>
    <property type="evidence" value="ECO:0000315"/>
    <property type="project" value="UniProtKB"/>
</dbReference>
<dbReference type="GO" id="GO:0045739">
    <property type="term" value="P:positive regulation of DNA repair"/>
    <property type="evidence" value="ECO:0000315"/>
    <property type="project" value="UniProtKB"/>
</dbReference>
<dbReference type="InterPro" id="IPR031630">
    <property type="entry name" value="CCDC117"/>
</dbReference>
<dbReference type="PANTHER" id="PTHR36128">
    <property type="entry name" value="COILED-COIL DOMAIN-CONTAINING PROTEIN 117"/>
    <property type="match status" value="1"/>
</dbReference>
<dbReference type="PANTHER" id="PTHR36128:SF1">
    <property type="entry name" value="COILED-COIL DOMAIN-CONTAINING PROTEIN 117"/>
    <property type="match status" value="1"/>
</dbReference>
<dbReference type="Pfam" id="PF15810">
    <property type="entry name" value="CCDC117"/>
    <property type="match status" value="1"/>
</dbReference>
<sequence>MAALGRPFSGLPLSGGSDFLQPPQPAFPGRAFPPGADGAELAPRPGPRAVPSSPAGSAARGRVSVHCKKKHKREEEEDDDCPVRKKRITEAELCAGPNDWILCAHQDVEGHGVNPSVSGLSIPGILDVICEEMDQTTGEPQCEVARRKLQEIEDRIIDEDEEVEADRNVNHLPSLVLSDTMKTGLKREFDEVFTKKMIESMSRPSMELVLWKPLPELLSDKPKPSSNTKNYTGESQAKHVAAGTAFPQRTELFSEPRPTGMSLYNSLETATSTEEEMEL</sequence>
<gene>
    <name evidence="8" type="primary">CCDC117</name>
</gene>
<keyword id="KW-0025">Alternative splicing</keyword>
<keyword id="KW-0175">Coiled coil</keyword>
<keyword id="KW-0963">Cytoplasm</keyword>
<keyword id="KW-0206">Cytoskeleton</keyword>
<keyword id="KW-0488">Methylation</keyword>
<keyword id="KW-0539">Nucleus</keyword>
<keyword id="KW-0597">Phosphoprotein</keyword>
<keyword id="KW-1267">Proteomics identification</keyword>
<keyword id="KW-1185">Reference proteome</keyword>
<accession>Q8IWD4</accession>
<accession>A8K0F1</accession>
<accession>B7Z2V1</accession>
<accession>B7Z860</accession>
<accession>Q6ICA7</accession>
<accession>Q8N278</accession>
<feature type="chain" id="PRO_0000254138" description="Coiled-coil domain-containing protein 117">
    <location>
        <begin position="1"/>
        <end position="279"/>
    </location>
</feature>
<feature type="region of interest" description="Disordered" evidence="3">
    <location>
        <begin position="1"/>
        <end position="82"/>
    </location>
</feature>
<feature type="region of interest" description="Disordered" evidence="3">
    <location>
        <begin position="217"/>
        <end position="279"/>
    </location>
</feature>
<feature type="coiled-coil region" evidence="2">
    <location>
        <begin position="141"/>
        <end position="168"/>
    </location>
</feature>
<feature type="compositionally biased region" description="Basic residues" evidence="3">
    <location>
        <begin position="63"/>
        <end position="72"/>
    </location>
</feature>
<feature type="compositionally biased region" description="Polar residues" evidence="3">
    <location>
        <begin position="224"/>
        <end position="235"/>
    </location>
</feature>
<feature type="compositionally biased region" description="Polar residues" evidence="3">
    <location>
        <begin position="262"/>
        <end position="272"/>
    </location>
</feature>
<feature type="modified residue" description="Omega-N-methylarginine" evidence="1">
    <location>
        <position position="48"/>
    </location>
</feature>
<feature type="modified residue" description="Phosphoserine" evidence="9">
    <location>
        <position position="53"/>
    </location>
</feature>
<feature type="splice variant" id="VSP_021185" description="In isoform 2." evidence="6">
    <location>
        <begin position="12"/>
        <end position="120"/>
    </location>
</feature>
<feature type="splice variant" id="VSP_054912" description="In isoform 3." evidence="5">
    <location>
        <begin position="63"/>
        <end position="80"/>
    </location>
</feature>
<feature type="splice variant" id="VSP_054913" description="In isoform 4." evidence="5">
    <original>DCPVRKKRITEAELCAGPNDWILCAHQDVEGHGVNPSVSGLSIPGILDVICEEMDQTTGEPQCEVARRKLQEIEDR</original>
    <variation>E</variation>
    <location>
        <begin position="80"/>
        <end position="155"/>
    </location>
</feature>
<feature type="sequence variant" id="VAR_028823" description="In dbSNP:rs13057011.">
    <original>R</original>
    <variation>S</variation>
    <location>
        <position position="147"/>
    </location>
</feature>
<feature type="sequence variant" id="VAR_028824" description="In dbSNP:rs9613680.">
    <original>S</original>
    <variation>N</variation>
    <location>
        <position position="272"/>
    </location>
</feature>
<feature type="sequence conflict" description="In Ref. 2; BAC03592." evidence="7" ref="2">
    <original>L</original>
    <variation>P</variation>
    <location>
        <position position="102"/>
    </location>
</feature>